<comment type="catalytic activity">
    <reaction evidence="1">
        <text>tRNA(Arg) + L-arginine + ATP = L-arginyl-tRNA(Arg) + AMP + diphosphate</text>
        <dbReference type="Rhea" id="RHEA:20301"/>
        <dbReference type="Rhea" id="RHEA-COMP:9658"/>
        <dbReference type="Rhea" id="RHEA-COMP:9673"/>
        <dbReference type="ChEBI" id="CHEBI:30616"/>
        <dbReference type="ChEBI" id="CHEBI:32682"/>
        <dbReference type="ChEBI" id="CHEBI:33019"/>
        <dbReference type="ChEBI" id="CHEBI:78442"/>
        <dbReference type="ChEBI" id="CHEBI:78513"/>
        <dbReference type="ChEBI" id="CHEBI:456215"/>
        <dbReference type="EC" id="6.1.1.19"/>
    </reaction>
</comment>
<comment type="subunit">
    <text evidence="1">Monomer.</text>
</comment>
<comment type="subcellular location">
    <subcellularLocation>
        <location evidence="1">Cytoplasm</location>
    </subcellularLocation>
</comment>
<comment type="similarity">
    <text evidence="1">Belongs to the class-I aminoacyl-tRNA synthetase family.</text>
</comment>
<reference key="1">
    <citation type="journal article" date="2008" name="PLoS ONE">
        <title>Comparative analysis of Acinetobacters: three genomes for three lifestyles.</title>
        <authorList>
            <person name="Vallenet D."/>
            <person name="Nordmann P."/>
            <person name="Barbe V."/>
            <person name="Poirel L."/>
            <person name="Mangenot S."/>
            <person name="Bataille E."/>
            <person name="Dossat C."/>
            <person name="Gas S."/>
            <person name="Kreimeyer A."/>
            <person name="Lenoble P."/>
            <person name="Oztas S."/>
            <person name="Poulain J."/>
            <person name="Segurens B."/>
            <person name="Robert C."/>
            <person name="Abergel C."/>
            <person name="Claverie J.-M."/>
            <person name="Raoult D."/>
            <person name="Medigue C."/>
            <person name="Weissenbach J."/>
            <person name="Cruveiller S."/>
        </authorList>
    </citation>
    <scope>NUCLEOTIDE SEQUENCE [LARGE SCALE GENOMIC DNA]</scope>
    <source>
        <strain>SDF</strain>
    </source>
</reference>
<organism>
    <name type="scientific">Acinetobacter baumannii (strain SDF)</name>
    <dbReference type="NCBI Taxonomy" id="509170"/>
    <lineage>
        <taxon>Bacteria</taxon>
        <taxon>Pseudomonadati</taxon>
        <taxon>Pseudomonadota</taxon>
        <taxon>Gammaproteobacteria</taxon>
        <taxon>Moraxellales</taxon>
        <taxon>Moraxellaceae</taxon>
        <taxon>Acinetobacter</taxon>
        <taxon>Acinetobacter calcoaceticus/baumannii complex</taxon>
    </lineage>
</organism>
<proteinExistence type="inferred from homology"/>
<feature type="chain" id="PRO_1000095327" description="Arginine--tRNA ligase">
    <location>
        <begin position="1"/>
        <end position="596"/>
    </location>
</feature>
<feature type="short sequence motif" description="'HIGH' region">
    <location>
        <begin position="128"/>
        <end position="138"/>
    </location>
</feature>
<gene>
    <name evidence="1" type="primary">argS</name>
    <name type="ordered locus">ABSDF0155</name>
</gene>
<evidence type="ECO:0000255" key="1">
    <source>
        <dbReference type="HAMAP-Rule" id="MF_00123"/>
    </source>
</evidence>
<protein>
    <recommendedName>
        <fullName evidence="1">Arginine--tRNA ligase</fullName>
        <ecNumber evidence="1">6.1.1.19</ecNumber>
    </recommendedName>
    <alternativeName>
        <fullName evidence="1">Arginyl-tRNA synthetase</fullName>
        <shortName evidence="1">ArgRS</shortName>
    </alternativeName>
</protein>
<keyword id="KW-0030">Aminoacyl-tRNA synthetase</keyword>
<keyword id="KW-0067">ATP-binding</keyword>
<keyword id="KW-0963">Cytoplasm</keyword>
<keyword id="KW-0436">Ligase</keyword>
<keyword id="KW-0547">Nucleotide-binding</keyword>
<keyword id="KW-0648">Protein biosynthesis</keyword>
<name>SYR_ACIBS</name>
<accession>B0VNJ1</accession>
<sequence length="596" mass="66334">MNTAIQAALDHAVQTLQQEGVLPSDWNNSSNLTRTKDRSHGDFASNIAMIGSKAAGMKPRDLAEKILAALPEVADISKAEIAGPGFINFFLNADQRFAILDQIQAQKESFGRSQSNVAKKIQVEFVSANPTSSLHVGHGRGAAYGMTVANLLEATGAKVDREYYVNDAGRQMDILATSTYLRYLELLGQNLVFPKNAYQGDYVKEIAQGIIDKDGDAYVREVANVYKDVPEDVQYAEELDSEGNKVVLSGDKEKHIDGLIANSQQLLGEGYRVFHQAALHAILDDIKDDLADFGVTFNQWFSEASLSAKIDEALETLDQRGFLYEKDGNIWFKSTEFGDEKDRVVKRRNGQTTYFASDIAYHLNKLQRGYTDLVDIWGSDHHGYISRVKAAIDAMGYDSKKLTVLLVQFVSLWRGGEMVQMSSRSGQFVTLRDLRKEVGNDAARFYYVMRKSEQHIDFDLDLAVSQSKDNAVYYIQYAHARICRMLEKAASTGLQFEVSAARSHAARLSLDAETEILAKLAAYPDVVLRAANAYEPHQVGNYLKELAALFHGWYNEHKVLSDDAELTQARLLLSINVQQVLRNGLELLGVSAPEAM</sequence>
<dbReference type="EC" id="6.1.1.19" evidence="1"/>
<dbReference type="EMBL" id="CU468230">
    <property type="protein sequence ID" value="CAO99561.1"/>
    <property type="molecule type" value="Genomic_DNA"/>
</dbReference>
<dbReference type="SMR" id="B0VNJ1"/>
<dbReference type="KEGG" id="abm:ABSDF0155"/>
<dbReference type="HOGENOM" id="CLU_006406_0_1_6"/>
<dbReference type="Proteomes" id="UP000001741">
    <property type="component" value="Chromosome"/>
</dbReference>
<dbReference type="GO" id="GO:0005737">
    <property type="term" value="C:cytoplasm"/>
    <property type="evidence" value="ECO:0007669"/>
    <property type="project" value="UniProtKB-SubCell"/>
</dbReference>
<dbReference type="GO" id="GO:0004814">
    <property type="term" value="F:arginine-tRNA ligase activity"/>
    <property type="evidence" value="ECO:0007669"/>
    <property type="project" value="UniProtKB-UniRule"/>
</dbReference>
<dbReference type="GO" id="GO:0005524">
    <property type="term" value="F:ATP binding"/>
    <property type="evidence" value="ECO:0007669"/>
    <property type="project" value="UniProtKB-UniRule"/>
</dbReference>
<dbReference type="GO" id="GO:0006420">
    <property type="term" value="P:arginyl-tRNA aminoacylation"/>
    <property type="evidence" value="ECO:0007669"/>
    <property type="project" value="UniProtKB-UniRule"/>
</dbReference>
<dbReference type="CDD" id="cd00671">
    <property type="entry name" value="ArgRS_core"/>
    <property type="match status" value="1"/>
</dbReference>
<dbReference type="FunFam" id="1.10.730.10:FF:000008">
    <property type="entry name" value="Arginine--tRNA ligase"/>
    <property type="match status" value="1"/>
</dbReference>
<dbReference type="Gene3D" id="3.30.1360.70">
    <property type="entry name" value="Arginyl tRNA synthetase N-terminal domain"/>
    <property type="match status" value="1"/>
</dbReference>
<dbReference type="Gene3D" id="3.40.50.620">
    <property type="entry name" value="HUPs"/>
    <property type="match status" value="1"/>
</dbReference>
<dbReference type="Gene3D" id="1.10.730.10">
    <property type="entry name" value="Isoleucyl-tRNA Synthetase, Domain 1"/>
    <property type="match status" value="1"/>
</dbReference>
<dbReference type="HAMAP" id="MF_00123">
    <property type="entry name" value="Arg_tRNA_synth"/>
    <property type="match status" value="1"/>
</dbReference>
<dbReference type="InterPro" id="IPR001278">
    <property type="entry name" value="Arg-tRNA-ligase"/>
</dbReference>
<dbReference type="InterPro" id="IPR005148">
    <property type="entry name" value="Arg-tRNA-synth_N"/>
</dbReference>
<dbReference type="InterPro" id="IPR036695">
    <property type="entry name" value="Arg-tRNA-synth_N_sf"/>
</dbReference>
<dbReference type="InterPro" id="IPR035684">
    <property type="entry name" value="ArgRS_core"/>
</dbReference>
<dbReference type="InterPro" id="IPR008909">
    <property type="entry name" value="DALR_anticod-bd"/>
</dbReference>
<dbReference type="InterPro" id="IPR014729">
    <property type="entry name" value="Rossmann-like_a/b/a_fold"/>
</dbReference>
<dbReference type="InterPro" id="IPR009080">
    <property type="entry name" value="tRNAsynth_Ia_anticodon-bd"/>
</dbReference>
<dbReference type="NCBIfam" id="TIGR00456">
    <property type="entry name" value="argS"/>
    <property type="match status" value="1"/>
</dbReference>
<dbReference type="PANTHER" id="PTHR11956:SF5">
    <property type="entry name" value="ARGININE--TRNA LIGASE, CYTOPLASMIC"/>
    <property type="match status" value="1"/>
</dbReference>
<dbReference type="PANTHER" id="PTHR11956">
    <property type="entry name" value="ARGINYL-TRNA SYNTHETASE"/>
    <property type="match status" value="1"/>
</dbReference>
<dbReference type="Pfam" id="PF03485">
    <property type="entry name" value="Arg_tRNA_synt_N"/>
    <property type="match status" value="1"/>
</dbReference>
<dbReference type="Pfam" id="PF05746">
    <property type="entry name" value="DALR_1"/>
    <property type="match status" value="1"/>
</dbReference>
<dbReference type="Pfam" id="PF00750">
    <property type="entry name" value="tRNA-synt_1d"/>
    <property type="match status" value="2"/>
</dbReference>
<dbReference type="PRINTS" id="PR01038">
    <property type="entry name" value="TRNASYNTHARG"/>
</dbReference>
<dbReference type="SMART" id="SM01016">
    <property type="entry name" value="Arg_tRNA_synt_N"/>
    <property type="match status" value="1"/>
</dbReference>
<dbReference type="SMART" id="SM00836">
    <property type="entry name" value="DALR_1"/>
    <property type="match status" value="1"/>
</dbReference>
<dbReference type="SUPFAM" id="SSF47323">
    <property type="entry name" value="Anticodon-binding domain of a subclass of class I aminoacyl-tRNA synthetases"/>
    <property type="match status" value="1"/>
</dbReference>
<dbReference type="SUPFAM" id="SSF55190">
    <property type="entry name" value="Arginyl-tRNA synthetase (ArgRS), N-terminal 'additional' domain"/>
    <property type="match status" value="1"/>
</dbReference>
<dbReference type="SUPFAM" id="SSF52374">
    <property type="entry name" value="Nucleotidylyl transferase"/>
    <property type="match status" value="1"/>
</dbReference>